<feature type="chain" id="PRO_0000203110" description="Small ribosomal subunit protein mS42">
    <location>
        <begin position="1"/>
        <end position="266"/>
    </location>
</feature>
<feature type="helix" evidence="12">
    <location>
        <begin position="17"/>
        <end position="23"/>
    </location>
</feature>
<feature type="turn" evidence="12">
    <location>
        <begin position="26"/>
        <end position="28"/>
    </location>
</feature>
<feature type="helix" evidence="12">
    <location>
        <begin position="31"/>
        <end position="37"/>
    </location>
</feature>
<feature type="turn" evidence="12">
    <location>
        <begin position="38"/>
        <end position="40"/>
    </location>
</feature>
<feature type="helix" evidence="12">
    <location>
        <begin position="41"/>
        <end position="53"/>
    </location>
</feature>
<feature type="helix" evidence="12">
    <location>
        <begin position="57"/>
        <end position="60"/>
    </location>
</feature>
<feature type="helix" evidence="12">
    <location>
        <begin position="63"/>
        <end position="70"/>
    </location>
</feature>
<feature type="helix" evidence="12">
    <location>
        <begin position="74"/>
        <end position="76"/>
    </location>
</feature>
<feature type="helix" evidence="12">
    <location>
        <begin position="77"/>
        <end position="94"/>
    </location>
</feature>
<feature type="helix" evidence="12">
    <location>
        <begin position="117"/>
        <end position="126"/>
    </location>
</feature>
<feature type="turn" evidence="12">
    <location>
        <begin position="127"/>
        <end position="129"/>
    </location>
</feature>
<feature type="helix" evidence="12">
    <location>
        <begin position="132"/>
        <end position="146"/>
    </location>
</feature>
<feature type="strand" evidence="12">
    <location>
        <begin position="149"/>
        <end position="157"/>
    </location>
</feature>
<feature type="strand" evidence="12">
    <location>
        <begin position="163"/>
        <end position="169"/>
    </location>
</feature>
<feature type="helix" evidence="12">
    <location>
        <begin position="177"/>
        <end position="179"/>
    </location>
</feature>
<feature type="helix" evidence="12">
    <location>
        <begin position="191"/>
        <end position="206"/>
    </location>
</feature>
<feature type="strand" evidence="12">
    <location>
        <begin position="219"/>
        <end position="225"/>
    </location>
</feature>
<feature type="helix" evidence="12">
    <location>
        <begin position="228"/>
        <end position="231"/>
    </location>
</feature>
<feature type="turn" evidence="12">
    <location>
        <begin position="232"/>
        <end position="235"/>
    </location>
</feature>
<feature type="helix" evidence="12">
    <location>
        <begin position="240"/>
        <end position="249"/>
    </location>
</feature>
<feature type="helix" evidence="12">
    <location>
        <begin position="253"/>
        <end position="258"/>
    </location>
</feature>
<name>RT26_YEAST</name>
<sequence>MLVFKRGIHVVPKLPNSKALLQNGVPNILSSSGFKTVWFDYQRYLCDKLTLATAGQSLESYYPFHILLKTAGNPLQSNIFNLASSIHNNHLFVENILPSAVEHGTNSNAVVKTEPSRLFLSKIKDSFNGSDWEVVKEEMIYRAENEVLGQGWLFLVENNEKKLFILTSNNNGTPYYFPRNQSFDLNSAISIDEFATLKQMKELIGKSTKLNGKVQDWTMPIICVNLWDHAYLHDYGVGNRSKYVKNVLDNLNWSVVNNRIFSGISK</sequence>
<reference key="1">
    <citation type="journal article" date="1996" name="EMBO J.">
        <title>Complete nucleotide sequence of Saccharomyces cerevisiae chromosome X.</title>
        <authorList>
            <person name="Galibert F."/>
            <person name="Alexandraki D."/>
            <person name="Baur A."/>
            <person name="Boles E."/>
            <person name="Chalwatzis N."/>
            <person name="Chuat J.-C."/>
            <person name="Coster F."/>
            <person name="Cziepluch C."/>
            <person name="de Haan M."/>
            <person name="Domdey H."/>
            <person name="Durand P."/>
            <person name="Entian K.-D."/>
            <person name="Gatius M."/>
            <person name="Goffeau A."/>
            <person name="Grivell L.A."/>
            <person name="Hennemann A."/>
            <person name="Herbert C.J."/>
            <person name="Heumann K."/>
            <person name="Hilger F."/>
            <person name="Hollenberg C.P."/>
            <person name="Huang M.-E."/>
            <person name="Jacq C."/>
            <person name="Jauniaux J.-C."/>
            <person name="Katsoulou C."/>
            <person name="Kirchrath L."/>
            <person name="Kleine K."/>
            <person name="Kordes E."/>
            <person name="Koetter P."/>
            <person name="Liebl S."/>
            <person name="Louis E.J."/>
            <person name="Manus V."/>
            <person name="Mewes H.-W."/>
            <person name="Miosga T."/>
            <person name="Obermaier B."/>
            <person name="Perea J."/>
            <person name="Pohl T.M."/>
            <person name="Portetelle D."/>
            <person name="Pujol A."/>
            <person name="Purnelle B."/>
            <person name="Ramezani Rad M."/>
            <person name="Rasmussen S.W."/>
            <person name="Rose M."/>
            <person name="Rossau R."/>
            <person name="Schaaff-Gerstenschlaeger I."/>
            <person name="Smits P.H.M."/>
            <person name="Scarcez T."/>
            <person name="Soriano N."/>
            <person name="To Van D."/>
            <person name="Tzermia M."/>
            <person name="Van Broekhoven A."/>
            <person name="Vandenbol M."/>
            <person name="Wedler H."/>
            <person name="von Wettstein D."/>
            <person name="Wambutt R."/>
            <person name="Zagulski M."/>
            <person name="Zollner A."/>
            <person name="Karpfinger-Hartl L."/>
        </authorList>
    </citation>
    <scope>NUCLEOTIDE SEQUENCE [LARGE SCALE GENOMIC DNA]</scope>
    <source>
        <strain>ATCC 204508 / S288c</strain>
    </source>
</reference>
<reference key="2">
    <citation type="journal article" date="2014" name="G3 (Bethesda)">
        <title>The reference genome sequence of Saccharomyces cerevisiae: Then and now.</title>
        <authorList>
            <person name="Engel S.R."/>
            <person name="Dietrich F.S."/>
            <person name="Fisk D.G."/>
            <person name="Binkley G."/>
            <person name="Balakrishnan R."/>
            <person name="Costanzo M.C."/>
            <person name="Dwight S.S."/>
            <person name="Hitz B.C."/>
            <person name="Karra K."/>
            <person name="Nash R.S."/>
            <person name="Weng S."/>
            <person name="Wong E.D."/>
            <person name="Lloyd P."/>
            <person name="Skrzypek M.S."/>
            <person name="Miyasato S.R."/>
            <person name="Simison M."/>
            <person name="Cherry J.M."/>
        </authorList>
    </citation>
    <scope>GENOME REANNOTATION</scope>
    <source>
        <strain>ATCC 204508 / S288c</strain>
    </source>
</reference>
<reference key="3">
    <citation type="journal article" date="2007" name="Genome Res.">
        <title>Approaching a complete repository of sequence-verified protein-encoding clones for Saccharomyces cerevisiae.</title>
        <authorList>
            <person name="Hu Y."/>
            <person name="Rolfs A."/>
            <person name="Bhullar B."/>
            <person name="Murthy T.V.S."/>
            <person name="Zhu C."/>
            <person name="Berger M.F."/>
            <person name="Camargo A.A."/>
            <person name="Kelley F."/>
            <person name="McCarron S."/>
            <person name="Jepson D."/>
            <person name="Richardson A."/>
            <person name="Raphael J."/>
            <person name="Moreira D."/>
            <person name="Taycher E."/>
            <person name="Zuo D."/>
            <person name="Mohr S."/>
            <person name="Kane M.F."/>
            <person name="Williamson J."/>
            <person name="Simpson A.J.G."/>
            <person name="Bulyk M.L."/>
            <person name="Harlow E."/>
            <person name="Marsischky G."/>
            <person name="Kolodner R.D."/>
            <person name="LaBaer J."/>
        </authorList>
    </citation>
    <scope>NUCLEOTIDE SEQUENCE [GENOMIC DNA]</scope>
    <source>
        <strain>ATCC 204508 / S288c</strain>
    </source>
</reference>
<reference key="4">
    <citation type="journal article" date="2001" name="J. Biol. Chem.">
        <title>Identification of 12 new yeast mitochondrial ribosomal proteins including 6 that have no prokaryotic homologues.</title>
        <authorList>
            <person name="Saveanu C."/>
            <person name="Fromont-Racine M."/>
            <person name="Harington A."/>
            <person name="Ricard F."/>
            <person name="Namane A."/>
            <person name="Jacquier A."/>
        </authorList>
    </citation>
    <scope>IDENTIFICATION IN THE MITOCHONDRIAL RIBOSOMAL SMALL COMPLEX</scope>
    <scope>IDENTIFICATION BY MASS SPECTROMETRY</scope>
</reference>
<reference key="5">
    <citation type="journal article" date="2002" name="Eur. J. Biochem.">
        <title>Tag-mediated isolation of yeast mitochondrial ribosome and mass spectrometric identification of its new components.</title>
        <authorList>
            <person name="Gan X."/>
            <person name="Kitakawa M."/>
            <person name="Yoshino K."/>
            <person name="Oshiro N."/>
            <person name="Yonezawa K."/>
            <person name="Isono K."/>
        </authorList>
    </citation>
    <scope>IDENTIFICATION IN THE MITOCHONDRIAL RIBOSOMAL SMALL COMPLEX</scope>
    <scope>IDENTIFICATION BY MASS SPECTROMETRY</scope>
</reference>
<reference key="6">
    <citation type="journal article" date="2003" name="Nature">
        <title>Global analysis of protein localization in budding yeast.</title>
        <authorList>
            <person name="Huh W.-K."/>
            <person name="Falvo J.V."/>
            <person name="Gerke L.C."/>
            <person name="Carroll A.S."/>
            <person name="Howson R.W."/>
            <person name="Weissman J.S."/>
            <person name="O'Shea E.K."/>
        </authorList>
    </citation>
    <scope>SUBCELLULAR LOCATION [LARGE SCALE ANALYSIS]</scope>
</reference>
<reference key="7">
    <citation type="journal article" date="2003" name="Nature">
        <title>Global analysis of protein expression in yeast.</title>
        <authorList>
            <person name="Ghaemmaghami S."/>
            <person name="Huh W.-K."/>
            <person name="Bower K."/>
            <person name="Howson R.W."/>
            <person name="Belle A."/>
            <person name="Dephoure N."/>
            <person name="O'Shea E.K."/>
            <person name="Weissman J.S."/>
        </authorList>
    </citation>
    <scope>LEVEL OF PROTEIN EXPRESSION [LARGE SCALE ANALYSIS]</scope>
</reference>
<reference key="8">
    <citation type="journal article" date="2003" name="Proc. Natl. Acad. Sci. U.S.A.">
        <title>The proteome of Saccharomyces cerevisiae mitochondria.</title>
        <authorList>
            <person name="Sickmann A."/>
            <person name="Reinders J."/>
            <person name="Wagner Y."/>
            <person name="Joppich C."/>
            <person name="Zahedi R.P."/>
            <person name="Meyer H.E."/>
            <person name="Schoenfisch B."/>
            <person name="Perschil I."/>
            <person name="Chacinska A."/>
            <person name="Guiard B."/>
            <person name="Rehling P."/>
            <person name="Pfanner N."/>
            <person name="Meisinger C."/>
        </authorList>
    </citation>
    <scope>SUBCELLULAR LOCATION [LARGE SCALE ANALYSIS]</scope>
    <source>
        <strain>ATCC 76625 / YPH499</strain>
    </source>
</reference>
<reference key="9">
    <citation type="journal article" date="2015" name="Nat. Commun.">
        <title>Organization of the mitochondrial translation machinery studied in situ by cryoelectron tomography.</title>
        <authorList>
            <person name="Pfeffer S."/>
            <person name="Woellhaf M.W."/>
            <person name="Herrmann J.M."/>
            <person name="Forster F."/>
        </authorList>
    </citation>
    <scope>SUBCELLULAR LOCATION</scope>
</reference>
<reference key="10">
    <citation type="journal article" date="2017" name="Science">
        <title>The structure of the yeast mitochondrial ribosome.</title>
        <authorList>
            <person name="Desai N."/>
            <person name="Brown A."/>
            <person name="Amunts A."/>
            <person name="Ramakrishnan V."/>
        </authorList>
    </citation>
    <scope>STRUCTURE BY ELECTRON MICROSCOPY (3.25 ANGSTROMS)</scope>
    <scope>SUBUNIT</scope>
</reference>
<dbReference type="EMBL" id="Z49601">
    <property type="protein sequence ID" value="CAA89631.1"/>
    <property type="molecule type" value="Genomic_DNA"/>
</dbReference>
<dbReference type="EMBL" id="AY557906">
    <property type="protein sequence ID" value="AAS56232.1"/>
    <property type="molecule type" value="Genomic_DNA"/>
</dbReference>
<dbReference type="EMBL" id="BK006943">
    <property type="protein sequence ID" value="DAA08886.1"/>
    <property type="molecule type" value="Genomic_DNA"/>
</dbReference>
<dbReference type="PIR" id="S57122">
    <property type="entry name" value="S57122"/>
</dbReference>
<dbReference type="RefSeq" id="NP_012635.1">
    <property type="nucleotide sequence ID" value="NM_001181759.1"/>
</dbReference>
<dbReference type="PDB" id="5MRC">
    <property type="method" value="EM"/>
    <property type="resolution" value="3.25 A"/>
    <property type="chains" value="33=8-262"/>
</dbReference>
<dbReference type="PDB" id="5MRE">
    <property type="method" value="EM"/>
    <property type="resolution" value="3.75 A"/>
    <property type="chains" value="33=8-262"/>
</dbReference>
<dbReference type="PDB" id="5MRF">
    <property type="method" value="EM"/>
    <property type="resolution" value="4.97 A"/>
    <property type="chains" value="33=8-262"/>
</dbReference>
<dbReference type="PDB" id="8D8K">
    <property type="method" value="EM"/>
    <property type="resolution" value="3.13 A"/>
    <property type="chains" value="3=1-266"/>
</dbReference>
<dbReference type="PDB" id="8D8L">
    <property type="method" value="EM"/>
    <property type="resolution" value="2.60 A"/>
    <property type="chains" value="3=1-266"/>
</dbReference>
<dbReference type="PDB" id="8OM2">
    <property type="method" value="EM"/>
    <property type="resolution" value="2.57 A"/>
    <property type="chains" value="3=1-266"/>
</dbReference>
<dbReference type="PDB" id="8OM3">
    <property type="method" value="EM"/>
    <property type="resolution" value="2.87 A"/>
    <property type="chains" value="3=1-266"/>
</dbReference>
<dbReference type="PDB" id="8OM4">
    <property type="method" value="EM"/>
    <property type="resolution" value="2.32 A"/>
    <property type="chains" value="3=1-266"/>
</dbReference>
<dbReference type="PDBsum" id="5MRC"/>
<dbReference type="PDBsum" id="5MRE"/>
<dbReference type="PDBsum" id="5MRF"/>
<dbReference type="PDBsum" id="8D8K"/>
<dbReference type="PDBsum" id="8D8L"/>
<dbReference type="PDBsum" id="8OM2"/>
<dbReference type="PDBsum" id="8OM3"/>
<dbReference type="PDBsum" id="8OM4"/>
<dbReference type="EMDB" id="EMD-16966"/>
<dbReference type="EMDB" id="EMD-16967"/>
<dbReference type="EMDB" id="EMD-16968"/>
<dbReference type="EMDB" id="EMD-27250"/>
<dbReference type="EMDB" id="EMD-27251"/>
<dbReference type="EMDB" id="EMD-3551"/>
<dbReference type="EMDB" id="EMD-3552"/>
<dbReference type="EMDB" id="EMD-3553"/>
<dbReference type="SMR" id="P47141"/>
<dbReference type="BioGRID" id="33857">
    <property type="interactions" value="171"/>
</dbReference>
<dbReference type="ComplexPortal" id="CPX-1603">
    <property type="entry name" value="37S mitochondrial small ribosomal subunit"/>
</dbReference>
<dbReference type="DIP" id="DIP-6695N"/>
<dbReference type="FunCoup" id="P47141">
    <property type="interactions" value="191"/>
</dbReference>
<dbReference type="IntAct" id="P47141">
    <property type="interactions" value="39"/>
</dbReference>
<dbReference type="MINT" id="P47141"/>
<dbReference type="STRING" id="4932.YJR101W"/>
<dbReference type="iPTMnet" id="P47141"/>
<dbReference type="PaxDb" id="4932-YJR101W"/>
<dbReference type="PeptideAtlas" id="P47141"/>
<dbReference type="EnsemblFungi" id="YJR101W_mRNA">
    <property type="protein sequence ID" value="YJR101W"/>
    <property type="gene ID" value="YJR101W"/>
</dbReference>
<dbReference type="GeneID" id="853565"/>
<dbReference type="KEGG" id="sce:YJR101W"/>
<dbReference type="AGR" id="SGD:S000003862"/>
<dbReference type="SGD" id="S000003862">
    <property type="gene designation" value="RSM26"/>
</dbReference>
<dbReference type="VEuPathDB" id="FungiDB:YJR101W"/>
<dbReference type="eggNOG" id="KOG0876">
    <property type="taxonomic scope" value="Eukaryota"/>
</dbReference>
<dbReference type="GeneTree" id="ENSGT00960000189181"/>
<dbReference type="HOGENOM" id="CLU_057349_1_1_1"/>
<dbReference type="InParanoid" id="P47141"/>
<dbReference type="OMA" id="MTAREPN"/>
<dbReference type="OrthoDB" id="275227at2759"/>
<dbReference type="BioCyc" id="YEAST:G3O-31729-MONOMER"/>
<dbReference type="BioGRID-ORCS" id="853565">
    <property type="hits" value="9 hits in 10 CRISPR screens"/>
</dbReference>
<dbReference type="PRO" id="PR:P47141"/>
<dbReference type="Proteomes" id="UP000002311">
    <property type="component" value="Chromosome X"/>
</dbReference>
<dbReference type="RNAct" id="P47141">
    <property type="molecule type" value="protein"/>
</dbReference>
<dbReference type="GO" id="GO:0005737">
    <property type="term" value="C:cytoplasm"/>
    <property type="evidence" value="ECO:0000318"/>
    <property type="project" value="GO_Central"/>
</dbReference>
<dbReference type="GO" id="GO:0005743">
    <property type="term" value="C:mitochondrial inner membrane"/>
    <property type="evidence" value="ECO:0000303"/>
    <property type="project" value="ComplexPortal"/>
</dbReference>
<dbReference type="GO" id="GO:0005763">
    <property type="term" value="C:mitochondrial small ribosomal subunit"/>
    <property type="evidence" value="ECO:0000314"/>
    <property type="project" value="SGD"/>
</dbReference>
<dbReference type="GO" id="GO:0005739">
    <property type="term" value="C:mitochondrion"/>
    <property type="evidence" value="ECO:0007005"/>
    <property type="project" value="SGD"/>
</dbReference>
<dbReference type="GO" id="GO:0046872">
    <property type="term" value="F:metal ion binding"/>
    <property type="evidence" value="ECO:0007669"/>
    <property type="project" value="InterPro"/>
</dbReference>
<dbReference type="GO" id="GO:0003735">
    <property type="term" value="F:structural constituent of ribosome"/>
    <property type="evidence" value="ECO:0000314"/>
    <property type="project" value="SGD"/>
</dbReference>
<dbReference type="GO" id="GO:0004784">
    <property type="term" value="F:superoxide dismutase activity"/>
    <property type="evidence" value="ECO:0007669"/>
    <property type="project" value="InterPro"/>
</dbReference>
<dbReference type="GO" id="GO:0032543">
    <property type="term" value="P:mitochondrial translation"/>
    <property type="evidence" value="ECO:0000303"/>
    <property type="project" value="ComplexPortal"/>
</dbReference>
<dbReference type="Gene3D" id="3.55.40.20">
    <property type="entry name" value="Iron/manganese superoxide dismutase, C-terminal domain"/>
    <property type="match status" value="1"/>
</dbReference>
<dbReference type="InterPro" id="IPR019832">
    <property type="entry name" value="Mn/Fe_SOD_C"/>
</dbReference>
<dbReference type="InterPro" id="IPR036324">
    <property type="entry name" value="Mn/Fe_SOD_N_sf"/>
</dbReference>
<dbReference type="InterPro" id="IPR036314">
    <property type="entry name" value="SOD_C_sf"/>
</dbReference>
<dbReference type="PANTHER" id="PTHR43595">
    <property type="entry name" value="37S RIBOSOMAL PROTEIN S26, MITOCHONDRIAL"/>
    <property type="match status" value="1"/>
</dbReference>
<dbReference type="PANTHER" id="PTHR43595:SF2">
    <property type="entry name" value="SMALL RIBOSOMAL SUBUNIT PROTEIN MS42"/>
    <property type="match status" value="1"/>
</dbReference>
<dbReference type="Pfam" id="PF02777">
    <property type="entry name" value="Sod_Fe_C"/>
    <property type="match status" value="1"/>
</dbReference>
<dbReference type="SUPFAM" id="SSF54719">
    <property type="entry name" value="Fe,Mn superoxide dismutase (SOD), C-terminal domain"/>
    <property type="match status" value="1"/>
</dbReference>
<dbReference type="SUPFAM" id="SSF46609">
    <property type="entry name" value="Fe,Mn superoxide dismutase (SOD), N-terminal domain"/>
    <property type="match status" value="1"/>
</dbReference>
<evidence type="ECO:0000269" key="1">
    <source>
    </source>
</evidence>
<evidence type="ECO:0000269" key="2">
    <source>
    </source>
</evidence>
<evidence type="ECO:0000269" key="3">
    <source>
    </source>
</evidence>
<evidence type="ECO:0000269" key="4">
    <source>
    </source>
</evidence>
<evidence type="ECO:0000269" key="5">
    <source>
    </source>
</evidence>
<evidence type="ECO:0000269" key="6">
    <source>
    </source>
</evidence>
<evidence type="ECO:0000269" key="7">
    <source>
    </source>
</evidence>
<evidence type="ECO:0000303" key="8">
    <source>
    </source>
</evidence>
<evidence type="ECO:0000305" key="9"/>
<evidence type="ECO:0000305" key="10">
    <source>
    </source>
</evidence>
<evidence type="ECO:0000305" key="11">
    <source>
    </source>
</evidence>
<evidence type="ECO:0007829" key="12">
    <source>
        <dbReference type="PDB" id="8D8L"/>
    </source>
</evidence>
<proteinExistence type="evidence at protein level"/>
<comment type="function">
    <text evidence="10 11">Component of the mitochondrial ribosome (mitoribosome), a dedicated translation machinery responsible for the synthesis of mitochondrial genome-encoded proteins, including at least some of the essential transmembrane subunits of the mitochondrial respiratory chain. The mitoribosomes are attached to the mitochondrial inner membrane and translation products are cotranslationally integrated into the membrane.</text>
</comment>
<comment type="subunit">
    <text evidence="1 2 7">Component of the mitochondrial small ribosomal subunit (mt-SSU). Mature yeast 74S mitochondrial ribosomes consist of a small (37S) and a large (54S) subunit. The 37S small subunit contains a 15S ribosomal RNA (15S mt-rRNA) and 34 different proteins. The 54S large subunit contains a 21S rRNA (21S mt-rRNA) and 46 different proteins. mS42 forms a heterodimer with mS43, building a large protuberance adjacent to the mRNA channel exit in the mt-SSU body.</text>
</comment>
<comment type="subcellular location">
    <subcellularLocation>
        <location evidence="3 5">Mitochondrion</location>
    </subcellularLocation>
    <text evidence="6">Mitoribosomes are tethered to the mitochondrial inner membrane and spatially aligned with the membrane insertion machinery through two distinct membrane contact sites, formed by the 21S rRNA expansion segment 96-ES1 and the inner membrane protein MBA1.</text>
</comment>
<comment type="miscellaneous">
    <text evidence="4">Present with 2060 molecules/cell in log phase SD medium.</text>
</comment>
<comment type="similarity">
    <text evidence="9">Belongs to the mitochondrion-specific ribosomal protein mS42 family.</text>
</comment>
<gene>
    <name type="primary">RSM26</name>
    <name type="ordered locus">YJR101W</name>
    <name type="ORF">J1952</name>
</gene>
<accession>P47141</accession>
<accession>D6VWS0</accession>
<keyword id="KW-0002">3D-structure</keyword>
<keyword id="KW-0496">Mitochondrion</keyword>
<keyword id="KW-1185">Reference proteome</keyword>
<keyword id="KW-0687">Ribonucleoprotein</keyword>
<keyword id="KW-0689">Ribosomal protein</keyword>
<organism>
    <name type="scientific">Saccharomyces cerevisiae (strain ATCC 204508 / S288c)</name>
    <name type="common">Baker's yeast</name>
    <dbReference type="NCBI Taxonomy" id="559292"/>
    <lineage>
        <taxon>Eukaryota</taxon>
        <taxon>Fungi</taxon>
        <taxon>Dikarya</taxon>
        <taxon>Ascomycota</taxon>
        <taxon>Saccharomycotina</taxon>
        <taxon>Saccharomycetes</taxon>
        <taxon>Saccharomycetales</taxon>
        <taxon>Saccharomycetaceae</taxon>
        <taxon>Saccharomyces</taxon>
    </lineage>
</organism>
<protein>
    <recommendedName>
        <fullName evidence="8">Small ribosomal subunit protein mS42</fullName>
    </recommendedName>
    <alternativeName>
        <fullName>37S ribosomal protein S26, mitochondrial</fullName>
    </alternativeName>
</protein>